<organism>
    <name type="scientific">Limosilactobacillus reuteri subsp. reuteri (strain JCM 1112)</name>
    <name type="common">Lactobacillus reuteri</name>
    <dbReference type="NCBI Taxonomy" id="557433"/>
    <lineage>
        <taxon>Bacteria</taxon>
        <taxon>Bacillati</taxon>
        <taxon>Bacillota</taxon>
        <taxon>Bacilli</taxon>
        <taxon>Lactobacillales</taxon>
        <taxon>Lactobacillaceae</taxon>
        <taxon>Limosilactobacillus</taxon>
    </lineage>
</organism>
<name>HEM3_LIMRJ</name>
<gene>
    <name evidence="1" type="primary">hemC</name>
    <name type="ordered locus">LAR_1590</name>
</gene>
<protein>
    <recommendedName>
        <fullName evidence="1">Porphobilinogen deaminase</fullName>
        <shortName evidence="1">PBG</shortName>
        <ecNumber evidence="1">2.5.1.61</ecNumber>
    </recommendedName>
    <alternativeName>
        <fullName evidence="1">Hydroxymethylbilane synthase</fullName>
        <shortName evidence="1">HMBS</shortName>
    </alternativeName>
    <alternativeName>
        <fullName evidence="1">Pre-uroporphyrinogen synthase</fullName>
    </alternativeName>
</protein>
<comment type="function">
    <text evidence="1">Tetrapolymerization of the monopyrrole PBG into the hydroxymethylbilane pre-uroporphyrinogen in several discrete steps.</text>
</comment>
<comment type="catalytic activity">
    <reaction evidence="1">
        <text>4 porphobilinogen + H2O = hydroxymethylbilane + 4 NH4(+)</text>
        <dbReference type="Rhea" id="RHEA:13185"/>
        <dbReference type="ChEBI" id="CHEBI:15377"/>
        <dbReference type="ChEBI" id="CHEBI:28938"/>
        <dbReference type="ChEBI" id="CHEBI:57845"/>
        <dbReference type="ChEBI" id="CHEBI:58126"/>
        <dbReference type="EC" id="2.5.1.61"/>
    </reaction>
</comment>
<comment type="cofactor">
    <cofactor evidence="1">
        <name>dipyrromethane</name>
        <dbReference type="ChEBI" id="CHEBI:60342"/>
    </cofactor>
    <text evidence="1">Binds 1 dipyrromethane group covalently.</text>
</comment>
<comment type="pathway">
    <text evidence="1">Porphyrin-containing compound metabolism; protoporphyrin-IX biosynthesis; coproporphyrinogen-III from 5-aminolevulinate: step 2/4.</text>
</comment>
<comment type="subunit">
    <text evidence="1">Monomer.</text>
</comment>
<comment type="miscellaneous">
    <text evidence="1">The porphobilinogen subunits are added to the dipyrromethane group.</text>
</comment>
<comment type="similarity">
    <text evidence="1">Belongs to the HMBS family.</text>
</comment>
<accession>B2G9H4</accession>
<evidence type="ECO:0000255" key="1">
    <source>
        <dbReference type="HAMAP-Rule" id="MF_00260"/>
    </source>
</evidence>
<dbReference type="EC" id="2.5.1.61" evidence="1"/>
<dbReference type="EMBL" id="AP007281">
    <property type="protein sequence ID" value="BAG26106.1"/>
    <property type="molecule type" value="Genomic_DNA"/>
</dbReference>
<dbReference type="RefSeq" id="WP_003669121.1">
    <property type="nucleotide sequence ID" value="NC_010609.1"/>
</dbReference>
<dbReference type="SMR" id="B2G9H4"/>
<dbReference type="KEGG" id="lrf:LAR_1590"/>
<dbReference type="HOGENOM" id="CLU_019704_1_0_9"/>
<dbReference type="UniPathway" id="UPA00251">
    <property type="reaction ID" value="UER00319"/>
</dbReference>
<dbReference type="GO" id="GO:0005737">
    <property type="term" value="C:cytoplasm"/>
    <property type="evidence" value="ECO:0007669"/>
    <property type="project" value="TreeGrafter"/>
</dbReference>
<dbReference type="GO" id="GO:0004418">
    <property type="term" value="F:hydroxymethylbilane synthase activity"/>
    <property type="evidence" value="ECO:0007669"/>
    <property type="project" value="UniProtKB-UniRule"/>
</dbReference>
<dbReference type="GO" id="GO:0006782">
    <property type="term" value="P:protoporphyrinogen IX biosynthetic process"/>
    <property type="evidence" value="ECO:0007669"/>
    <property type="project" value="UniProtKB-UniRule"/>
</dbReference>
<dbReference type="FunFam" id="3.40.190.10:FF:000005">
    <property type="entry name" value="Porphobilinogen deaminase"/>
    <property type="match status" value="1"/>
</dbReference>
<dbReference type="FunFam" id="3.40.190.10:FF:000086">
    <property type="entry name" value="Probable porphobilinogen deaminase"/>
    <property type="match status" value="1"/>
</dbReference>
<dbReference type="Gene3D" id="3.40.190.10">
    <property type="entry name" value="Periplasmic binding protein-like II"/>
    <property type="match status" value="2"/>
</dbReference>
<dbReference type="Gene3D" id="3.30.160.40">
    <property type="entry name" value="Porphobilinogen deaminase, C-terminal domain"/>
    <property type="match status" value="1"/>
</dbReference>
<dbReference type="HAMAP" id="MF_00260">
    <property type="entry name" value="Porphobil_deam"/>
    <property type="match status" value="1"/>
</dbReference>
<dbReference type="InterPro" id="IPR000860">
    <property type="entry name" value="HemC"/>
</dbReference>
<dbReference type="InterPro" id="IPR022417">
    <property type="entry name" value="Porphobilin_deaminase_N"/>
</dbReference>
<dbReference type="InterPro" id="IPR022418">
    <property type="entry name" value="Porphobilinogen_deaminase_C"/>
</dbReference>
<dbReference type="InterPro" id="IPR036803">
    <property type="entry name" value="Porphobilinogen_deaminase_C_sf"/>
</dbReference>
<dbReference type="NCBIfam" id="TIGR00212">
    <property type="entry name" value="hemC"/>
    <property type="match status" value="1"/>
</dbReference>
<dbReference type="PANTHER" id="PTHR11557">
    <property type="entry name" value="PORPHOBILINOGEN DEAMINASE"/>
    <property type="match status" value="1"/>
</dbReference>
<dbReference type="PANTHER" id="PTHR11557:SF0">
    <property type="entry name" value="PORPHOBILINOGEN DEAMINASE"/>
    <property type="match status" value="1"/>
</dbReference>
<dbReference type="Pfam" id="PF01379">
    <property type="entry name" value="Porphobil_deam"/>
    <property type="match status" value="1"/>
</dbReference>
<dbReference type="Pfam" id="PF03900">
    <property type="entry name" value="Porphobil_deamC"/>
    <property type="match status" value="1"/>
</dbReference>
<dbReference type="PIRSF" id="PIRSF001438">
    <property type="entry name" value="4pyrrol_synth_OHMeBilane_synth"/>
    <property type="match status" value="1"/>
</dbReference>
<dbReference type="PRINTS" id="PR00151">
    <property type="entry name" value="PORPHBDMNASE"/>
</dbReference>
<dbReference type="SUPFAM" id="SSF53850">
    <property type="entry name" value="Periplasmic binding protein-like II"/>
    <property type="match status" value="1"/>
</dbReference>
<dbReference type="SUPFAM" id="SSF54782">
    <property type="entry name" value="Porphobilinogen deaminase (hydroxymethylbilane synthase), C-terminal domain"/>
    <property type="match status" value="1"/>
</dbReference>
<feature type="chain" id="PRO_1000114161" description="Porphobilinogen deaminase">
    <location>
        <begin position="1"/>
        <end position="305"/>
    </location>
</feature>
<feature type="modified residue" description="S-(dipyrrolylmethanemethyl)cysteine" evidence="1">
    <location>
        <position position="243"/>
    </location>
</feature>
<proteinExistence type="inferred from homology"/>
<reference key="1">
    <citation type="journal article" date="2008" name="DNA Res.">
        <title>Comparative genome analysis of Lactobacillus reuteri and Lactobacillus fermentum reveal a genomic island for reuterin and cobalamin production.</title>
        <authorList>
            <person name="Morita H."/>
            <person name="Toh H."/>
            <person name="Fukuda S."/>
            <person name="Horikawa H."/>
            <person name="Oshima K."/>
            <person name="Suzuki T."/>
            <person name="Murakami M."/>
            <person name="Hisamatsu S."/>
            <person name="Kato Y."/>
            <person name="Takizawa T."/>
            <person name="Fukuoka H."/>
            <person name="Yoshimura T."/>
            <person name="Itoh K."/>
            <person name="O'Sullivan D.J."/>
            <person name="McKay L.L."/>
            <person name="Ohno H."/>
            <person name="Kikuchi J."/>
            <person name="Masaoka T."/>
            <person name="Hattori M."/>
        </authorList>
    </citation>
    <scope>NUCLEOTIDE SEQUENCE [LARGE SCALE GENOMIC DNA]</scope>
    <source>
        <strain>JCM 1112</strain>
    </source>
</reference>
<keyword id="KW-0627">Porphyrin biosynthesis</keyword>
<keyword id="KW-0808">Transferase</keyword>
<sequence>MTNKVIVGSRKSKLAMAQTELVIASLEKIFPDIKFEIKNVITEGDRNRHVSLAKIGGKGVFVKEIEDELKDGTIDFAVHSLKDVMPILPEELVLGAFPKRVSPYDCLVSRKNLSSLNDLPKGARIGTNSLRRQGQLLSIRPDLKIIPIRGNIDTRLRKIDTEALDGIILAEAGLTRLNIDLSSYHVLDLQNYIMPAVGQGCLAIECRKNDTRIRKMLDQINDEESAYCVQVEREFMRELGGSCNFPIGGHAYAKNGQILFDGLIASPNGEHVIKETKIPANNSGVGKKVADQLLAKDKFGIIEGE</sequence>